<keyword id="KW-0067">ATP-binding</keyword>
<keyword id="KW-0347">Helicase</keyword>
<keyword id="KW-0378">Hydrolase</keyword>
<keyword id="KW-0547">Nucleotide-binding</keyword>
<keyword id="KW-1185">Reference proteome</keyword>
<keyword id="KW-0694">RNA-binding</keyword>
<comment type="catalytic activity">
    <reaction>
        <text>ATP + H2O = ADP + phosphate + H(+)</text>
        <dbReference type="Rhea" id="RHEA:13065"/>
        <dbReference type="ChEBI" id="CHEBI:15377"/>
        <dbReference type="ChEBI" id="CHEBI:15378"/>
        <dbReference type="ChEBI" id="CHEBI:30616"/>
        <dbReference type="ChEBI" id="CHEBI:43474"/>
        <dbReference type="ChEBI" id="CHEBI:456216"/>
        <dbReference type="EC" id="3.6.4.13"/>
    </reaction>
</comment>
<comment type="domain">
    <text>The Q motif is unique to and characteristic of the DEAD box family of RNA helicases and controls ATP binding and hydrolysis.</text>
</comment>
<comment type="similarity">
    <text evidence="4">Belongs to the DEAD box helicase family. DDX55/SPB4 subfamily.</text>
</comment>
<dbReference type="EC" id="3.6.4.13"/>
<dbReference type="EMBL" id="AC016163">
    <property type="protein sequence ID" value="AAG51820.1"/>
    <property type="molecule type" value="Genomic_DNA"/>
</dbReference>
<dbReference type="EMBL" id="CP002684">
    <property type="protein sequence ID" value="AEE35194.1"/>
    <property type="molecule type" value="Genomic_DNA"/>
</dbReference>
<dbReference type="EMBL" id="AK118294">
    <property type="protein sequence ID" value="BAC42912.1"/>
    <property type="molecule type" value="mRNA"/>
</dbReference>
<dbReference type="RefSeq" id="NP_177293.1">
    <property type="nucleotide sequence ID" value="NM_105806.2"/>
</dbReference>
<dbReference type="SMR" id="Q8GXD6"/>
<dbReference type="BioGRID" id="28698">
    <property type="interactions" value="1"/>
</dbReference>
<dbReference type="FunCoup" id="Q8GXD6">
    <property type="interactions" value="3994"/>
</dbReference>
<dbReference type="STRING" id="3702.Q8GXD6"/>
<dbReference type="PaxDb" id="3702-AT1G71370.1"/>
<dbReference type="ProteomicsDB" id="236859"/>
<dbReference type="EnsemblPlants" id="AT1G71370.1">
    <property type="protein sequence ID" value="AT1G71370.1"/>
    <property type="gene ID" value="AT1G71370"/>
</dbReference>
<dbReference type="GeneID" id="843478"/>
<dbReference type="Gramene" id="AT1G71370.1">
    <property type="protein sequence ID" value="AT1G71370.1"/>
    <property type="gene ID" value="AT1G71370"/>
</dbReference>
<dbReference type="KEGG" id="ath:AT1G71370"/>
<dbReference type="Araport" id="AT1G71370"/>
<dbReference type="TAIR" id="AT1G71370"/>
<dbReference type="eggNOG" id="KOG0345">
    <property type="taxonomic scope" value="Eukaryota"/>
</dbReference>
<dbReference type="HOGENOM" id="CLU_003041_26_4_1"/>
<dbReference type="InParanoid" id="Q8GXD6"/>
<dbReference type="OMA" id="MPNEKEY"/>
<dbReference type="PhylomeDB" id="Q8GXD6"/>
<dbReference type="PRO" id="PR:Q8GXD6"/>
<dbReference type="Proteomes" id="UP000006548">
    <property type="component" value="Chromosome 1"/>
</dbReference>
<dbReference type="ExpressionAtlas" id="Q8GXD6">
    <property type="expression patterns" value="baseline and differential"/>
</dbReference>
<dbReference type="GO" id="GO:0005524">
    <property type="term" value="F:ATP binding"/>
    <property type="evidence" value="ECO:0007669"/>
    <property type="project" value="UniProtKB-KW"/>
</dbReference>
<dbReference type="GO" id="GO:0016887">
    <property type="term" value="F:ATP hydrolysis activity"/>
    <property type="evidence" value="ECO:0007669"/>
    <property type="project" value="RHEA"/>
</dbReference>
<dbReference type="GO" id="GO:0003723">
    <property type="term" value="F:RNA binding"/>
    <property type="evidence" value="ECO:0007669"/>
    <property type="project" value="UniProtKB-KW"/>
</dbReference>
<dbReference type="GO" id="GO:0003724">
    <property type="term" value="F:RNA helicase activity"/>
    <property type="evidence" value="ECO:0007669"/>
    <property type="project" value="UniProtKB-EC"/>
</dbReference>
<dbReference type="CDD" id="cd17960">
    <property type="entry name" value="DEADc_DDX55"/>
    <property type="match status" value="1"/>
</dbReference>
<dbReference type="CDD" id="cd18787">
    <property type="entry name" value="SF2_C_DEAD"/>
    <property type="match status" value="1"/>
</dbReference>
<dbReference type="FunFam" id="3.40.50.300:FF:000877">
    <property type="entry name" value="RNA helicase"/>
    <property type="match status" value="1"/>
</dbReference>
<dbReference type="Gene3D" id="3.40.50.300">
    <property type="entry name" value="P-loop containing nucleotide triphosphate hydrolases"/>
    <property type="match status" value="2"/>
</dbReference>
<dbReference type="InterPro" id="IPR011545">
    <property type="entry name" value="DEAD/DEAH_box_helicase_dom"/>
</dbReference>
<dbReference type="InterPro" id="IPR014001">
    <property type="entry name" value="Helicase_ATP-bd"/>
</dbReference>
<dbReference type="InterPro" id="IPR001650">
    <property type="entry name" value="Helicase_C-like"/>
</dbReference>
<dbReference type="InterPro" id="IPR027417">
    <property type="entry name" value="P-loop_NTPase"/>
</dbReference>
<dbReference type="InterPro" id="IPR000629">
    <property type="entry name" value="RNA-helicase_DEAD-box_CS"/>
</dbReference>
<dbReference type="InterPro" id="IPR014014">
    <property type="entry name" value="RNA_helicase_DEAD_Q_motif"/>
</dbReference>
<dbReference type="InterPro" id="IPR025313">
    <property type="entry name" value="SPB4-like_CTE"/>
</dbReference>
<dbReference type="PANTHER" id="PTHR24031">
    <property type="entry name" value="RNA HELICASE"/>
    <property type="match status" value="1"/>
</dbReference>
<dbReference type="Pfam" id="PF13959">
    <property type="entry name" value="CTE_SPB4"/>
    <property type="match status" value="1"/>
</dbReference>
<dbReference type="Pfam" id="PF00270">
    <property type="entry name" value="DEAD"/>
    <property type="match status" value="1"/>
</dbReference>
<dbReference type="Pfam" id="PF00271">
    <property type="entry name" value="Helicase_C"/>
    <property type="match status" value="1"/>
</dbReference>
<dbReference type="SMART" id="SM00487">
    <property type="entry name" value="DEXDc"/>
    <property type="match status" value="1"/>
</dbReference>
<dbReference type="SMART" id="SM01178">
    <property type="entry name" value="DUF4217"/>
    <property type="match status" value="1"/>
</dbReference>
<dbReference type="SMART" id="SM00490">
    <property type="entry name" value="HELICc"/>
    <property type="match status" value="1"/>
</dbReference>
<dbReference type="SUPFAM" id="SSF52540">
    <property type="entry name" value="P-loop containing nucleoside triphosphate hydrolases"/>
    <property type="match status" value="1"/>
</dbReference>
<dbReference type="PROSITE" id="PS00039">
    <property type="entry name" value="DEAD_ATP_HELICASE"/>
    <property type="match status" value="1"/>
</dbReference>
<dbReference type="PROSITE" id="PS51192">
    <property type="entry name" value="HELICASE_ATP_BIND_1"/>
    <property type="match status" value="1"/>
</dbReference>
<dbReference type="PROSITE" id="PS51194">
    <property type="entry name" value="HELICASE_CTER"/>
    <property type="match status" value="1"/>
</dbReference>
<dbReference type="PROSITE" id="PS51195">
    <property type="entry name" value="Q_MOTIF"/>
    <property type="match status" value="1"/>
</dbReference>
<sequence>MDSSPPKTITKALPRFSELKPPLSEDIIEALDRSGFEVCTPVQAETIPFLCSHKDVVVDAATGSGKTLAFLLPFIEIIRRSNSYPPKPHQVMGVIISPTRELSAQIHKVAEPFVSTLPNVNSVLLVGGREVEADMNTLEEEGANLLIGTPGRLSDMMKRMEFLDFRNLEILILDEADRLLDMGFQKQVNYIISRLPKQRRTGLFSATQTQAVADLAKAGLRNAMEVISGAESKSKTSSGLYCEYLKCEADQKSSQLVHLLIENKNKKLVVFFMTCACVDYWGLVLSKIPTLKSISFFSTHGKMDQKGRDTALASFTEASSGVLLCTDVAARGLDIPGIDYVVQYDPPQDPDVFIHRVGRTARMERQGRAIVFLMPKETDYVEFMRIRRVPLQERKCSENASDVIPIIRSLAIKDRAVLEKGLQAFVSFVRAYKEHHCSYIFSWKGLEIGKLAMGYGILSFPYISEVKQDRIGIVGFTPVQGITFEDIKYKNKSREKQRQQNLLARKDKLQQEKRGKRKKSSKEAVDDSNKASRKRKLTGRQRQTIQTAQDEEEMNLRL</sequence>
<feature type="chain" id="PRO_0000239189" description="DEAD-box ATP-dependent RNA helicase 49">
    <location>
        <begin position="1"/>
        <end position="558"/>
    </location>
</feature>
<feature type="domain" description="Helicase ATP-binding" evidence="1">
    <location>
        <begin position="47"/>
        <end position="226"/>
    </location>
</feature>
<feature type="domain" description="Helicase C-terminal" evidence="2">
    <location>
        <begin position="255"/>
        <end position="402"/>
    </location>
</feature>
<feature type="region of interest" description="Disordered" evidence="3">
    <location>
        <begin position="506"/>
        <end position="558"/>
    </location>
</feature>
<feature type="short sequence motif" description="Q motif">
    <location>
        <begin position="16"/>
        <end position="44"/>
    </location>
</feature>
<feature type="short sequence motif" description="DEAD box">
    <location>
        <begin position="174"/>
        <end position="177"/>
    </location>
</feature>
<feature type="compositionally biased region" description="Basic and acidic residues" evidence="3">
    <location>
        <begin position="521"/>
        <end position="530"/>
    </location>
</feature>
<feature type="compositionally biased region" description="Acidic residues" evidence="3">
    <location>
        <begin position="549"/>
        <end position="558"/>
    </location>
</feature>
<feature type="binding site" evidence="1">
    <location>
        <begin position="60"/>
        <end position="67"/>
    </location>
    <ligand>
        <name>ATP</name>
        <dbReference type="ChEBI" id="CHEBI:30616"/>
    </ligand>
</feature>
<feature type="sequence conflict" description="In Ref. 3; BAC42912." evidence="4" ref="3">
    <original>G</original>
    <variation>R</variation>
    <location>
        <position position="539"/>
    </location>
</feature>
<accession>Q8GXD6</accession>
<accession>Q9C9H4</accession>
<gene>
    <name type="primary">RH49</name>
    <name type="ordered locus">At1g71370</name>
    <name type="ORF">F26A9.25</name>
</gene>
<protein>
    <recommendedName>
        <fullName>DEAD-box ATP-dependent RNA helicase 49</fullName>
        <ecNumber>3.6.4.13</ecNumber>
    </recommendedName>
</protein>
<reference key="1">
    <citation type="journal article" date="2000" name="Nature">
        <title>Sequence and analysis of chromosome 1 of the plant Arabidopsis thaliana.</title>
        <authorList>
            <person name="Theologis A."/>
            <person name="Ecker J.R."/>
            <person name="Palm C.J."/>
            <person name="Federspiel N.A."/>
            <person name="Kaul S."/>
            <person name="White O."/>
            <person name="Alonso J."/>
            <person name="Altafi H."/>
            <person name="Araujo R."/>
            <person name="Bowman C.L."/>
            <person name="Brooks S.Y."/>
            <person name="Buehler E."/>
            <person name="Chan A."/>
            <person name="Chao Q."/>
            <person name="Chen H."/>
            <person name="Cheuk R.F."/>
            <person name="Chin C.W."/>
            <person name="Chung M.K."/>
            <person name="Conn L."/>
            <person name="Conway A.B."/>
            <person name="Conway A.R."/>
            <person name="Creasy T.H."/>
            <person name="Dewar K."/>
            <person name="Dunn P."/>
            <person name="Etgu P."/>
            <person name="Feldblyum T.V."/>
            <person name="Feng J.-D."/>
            <person name="Fong B."/>
            <person name="Fujii C.Y."/>
            <person name="Gill J.E."/>
            <person name="Goldsmith A.D."/>
            <person name="Haas B."/>
            <person name="Hansen N.F."/>
            <person name="Hughes B."/>
            <person name="Huizar L."/>
            <person name="Hunter J.L."/>
            <person name="Jenkins J."/>
            <person name="Johnson-Hopson C."/>
            <person name="Khan S."/>
            <person name="Khaykin E."/>
            <person name="Kim C.J."/>
            <person name="Koo H.L."/>
            <person name="Kremenetskaia I."/>
            <person name="Kurtz D.B."/>
            <person name="Kwan A."/>
            <person name="Lam B."/>
            <person name="Langin-Hooper S."/>
            <person name="Lee A."/>
            <person name="Lee J.M."/>
            <person name="Lenz C.A."/>
            <person name="Li J.H."/>
            <person name="Li Y.-P."/>
            <person name="Lin X."/>
            <person name="Liu S.X."/>
            <person name="Liu Z.A."/>
            <person name="Luros J.S."/>
            <person name="Maiti R."/>
            <person name="Marziali A."/>
            <person name="Militscher J."/>
            <person name="Miranda M."/>
            <person name="Nguyen M."/>
            <person name="Nierman W.C."/>
            <person name="Osborne B.I."/>
            <person name="Pai G."/>
            <person name="Peterson J."/>
            <person name="Pham P.K."/>
            <person name="Rizzo M."/>
            <person name="Rooney T."/>
            <person name="Rowley D."/>
            <person name="Sakano H."/>
            <person name="Salzberg S.L."/>
            <person name="Schwartz J.R."/>
            <person name="Shinn P."/>
            <person name="Southwick A.M."/>
            <person name="Sun H."/>
            <person name="Tallon L.J."/>
            <person name="Tambunga G."/>
            <person name="Toriumi M.J."/>
            <person name="Town C.D."/>
            <person name="Utterback T."/>
            <person name="Van Aken S."/>
            <person name="Vaysberg M."/>
            <person name="Vysotskaia V.S."/>
            <person name="Walker M."/>
            <person name="Wu D."/>
            <person name="Yu G."/>
            <person name="Fraser C.M."/>
            <person name="Venter J.C."/>
            <person name="Davis R.W."/>
        </authorList>
    </citation>
    <scope>NUCLEOTIDE SEQUENCE [LARGE SCALE GENOMIC DNA]</scope>
    <source>
        <strain>cv. Columbia</strain>
    </source>
</reference>
<reference key="2">
    <citation type="journal article" date="2017" name="Plant J.">
        <title>Araport11: a complete reannotation of the Arabidopsis thaliana reference genome.</title>
        <authorList>
            <person name="Cheng C.Y."/>
            <person name="Krishnakumar V."/>
            <person name="Chan A.P."/>
            <person name="Thibaud-Nissen F."/>
            <person name="Schobel S."/>
            <person name="Town C.D."/>
        </authorList>
    </citation>
    <scope>GENOME REANNOTATION</scope>
    <source>
        <strain>cv. Columbia</strain>
    </source>
</reference>
<reference key="3">
    <citation type="journal article" date="2002" name="Science">
        <title>Functional annotation of a full-length Arabidopsis cDNA collection.</title>
        <authorList>
            <person name="Seki M."/>
            <person name="Narusaka M."/>
            <person name="Kamiya A."/>
            <person name="Ishida J."/>
            <person name="Satou M."/>
            <person name="Sakurai T."/>
            <person name="Nakajima M."/>
            <person name="Enju A."/>
            <person name="Akiyama K."/>
            <person name="Oono Y."/>
            <person name="Muramatsu M."/>
            <person name="Hayashizaki Y."/>
            <person name="Kawai J."/>
            <person name="Carninci P."/>
            <person name="Itoh M."/>
            <person name="Ishii Y."/>
            <person name="Arakawa T."/>
            <person name="Shibata K."/>
            <person name="Shinagawa A."/>
            <person name="Shinozaki K."/>
        </authorList>
    </citation>
    <scope>NUCLEOTIDE SEQUENCE [LARGE SCALE MRNA]</scope>
    <source>
        <strain>cv. Columbia</strain>
    </source>
</reference>
<reference key="4">
    <citation type="journal article" date="2004" name="Plant Biotechnol. J.">
        <title>DEAD-box RNA helicases in Arabidopsis thaliana: establishing a link between quantitative expression, gene structure and evolution of a family of genes.</title>
        <authorList>
            <person name="Mingam A."/>
            <person name="Toffano-Nioche C."/>
            <person name="Brunaud V."/>
            <person name="Boudet N."/>
            <person name="Kreis M."/>
            <person name="Lecharny A."/>
        </authorList>
    </citation>
    <scope>GENE FAMILY</scope>
    <scope>NOMENCLATURE</scope>
</reference>
<reference key="5">
    <citation type="journal article" date="2013" name="PLoS ONE">
        <title>Genome-wide comparative in silico analysis of the RNA helicase gene family in Zea mays and Glycine max: a comparison with Arabidopsis and Oryza sativa.</title>
        <authorList>
            <person name="Xu R."/>
            <person name="Zhang S."/>
            <person name="Huang J."/>
            <person name="Zheng C."/>
        </authorList>
    </citation>
    <scope>GENE FAMILY</scope>
</reference>
<organism>
    <name type="scientific">Arabidopsis thaliana</name>
    <name type="common">Mouse-ear cress</name>
    <dbReference type="NCBI Taxonomy" id="3702"/>
    <lineage>
        <taxon>Eukaryota</taxon>
        <taxon>Viridiplantae</taxon>
        <taxon>Streptophyta</taxon>
        <taxon>Embryophyta</taxon>
        <taxon>Tracheophyta</taxon>
        <taxon>Spermatophyta</taxon>
        <taxon>Magnoliopsida</taxon>
        <taxon>eudicotyledons</taxon>
        <taxon>Gunneridae</taxon>
        <taxon>Pentapetalae</taxon>
        <taxon>rosids</taxon>
        <taxon>malvids</taxon>
        <taxon>Brassicales</taxon>
        <taxon>Brassicaceae</taxon>
        <taxon>Camelineae</taxon>
        <taxon>Arabidopsis</taxon>
    </lineage>
</organism>
<evidence type="ECO:0000255" key="1">
    <source>
        <dbReference type="PROSITE-ProRule" id="PRU00541"/>
    </source>
</evidence>
<evidence type="ECO:0000255" key="2">
    <source>
        <dbReference type="PROSITE-ProRule" id="PRU00542"/>
    </source>
</evidence>
<evidence type="ECO:0000256" key="3">
    <source>
        <dbReference type="SAM" id="MobiDB-lite"/>
    </source>
</evidence>
<evidence type="ECO:0000305" key="4"/>
<name>RH49_ARATH</name>
<proteinExistence type="evidence at transcript level"/>